<name>ISLA_DESDA</name>
<organism>
    <name type="scientific">Desulfovibrio desulfuricans (strain ATCC 27774 / DSM 6949 / MB)</name>
    <dbReference type="NCBI Taxonomy" id="525146"/>
    <lineage>
        <taxon>Bacteria</taxon>
        <taxon>Pseudomonadati</taxon>
        <taxon>Thermodesulfobacteriota</taxon>
        <taxon>Desulfovibrionia</taxon>
        <taxon>Desulfovibrionales</taxon>
        <taxon>Desulfovibrionaceae</taxon>
        <taxon>Desulfovibrio</taxon>
    </lineage>
</organism>
<sequence length="831" mass="94548">MSMTTCECRSPQEQRLYDKIEGREDRFRKTHPRVFRLLERFEGQKPRIDIERALYFTQSMQETEGQPLVLRWAKALMHIARNMTVYVQEDQLLLGRAGCDGRYGILYPELDGDFLDIAVRDLPTRKTSPATITPEDARRVVEEIAPYWKGKTYHEALNAALPAEVHKLTYDDPEGLISRFIVNETSSFRSSIQWVHDYEKILKRGFNSIKKEAREKLAALDPLSAKDDREKRPFLEAVMIVCDAIVLWAKRHAVLAREMAEKESDPVRKAELLRMAENAEHVPGEPARDFWEACQSQWFTQMFSRIEQKTGTTISNGRMDQYFQPYYKQDREAGKITEAQAMELLECMWVGMAEFIDMYISPTGGAFNEGYAHWEAVTVGGQTPDGRDASNDLTYLILKSKREFPLHYPDLAARIHSRAPERYLWDVAETIKYGSGFPKLINDEEIVPLYVSKGATFEEALDYAVSGCTEARMPNRDTYTSGGAYINFAAAVEMVLRNGRMKKYGDQKLGVETGDPRSFTTWDQFWNAYVEQHLLFLKTAFTQQYIINKLRAEHFAQPMGSAMHDLCMKHCIDLHQEQIPEGINLGYFEYMGLGTVVDSLAAVKKLVFEEKKLSMDKLIAAIDADFEGYEDVRALLRSAPCYGNNDEYADAIGRDIDRISVEYGNKYSMSDLGIHNDVRYVPFTSHVPFGKVVSATPNGRTDGFPLSDGSSASHGADVNGPTAVLLSNCTTKNMGLRDRAARMLNIKFTPKCVEGEQGTEKLVSFIRTFCDLKLWHVQFNVVNKGTLVAAQKDPQKYRNLIVRIAGYSAYFVDLSPDLQNDLIARTEHDVM</sequence>
<evidence type="ECO:0000250" key="1">
    <source>
        <dbReference type="UniProtKB" id="Q30W70"/>
    </source>
</evidence>
<evidence type="ECO:0000250" key="2">
    <source>
        <dbReference type="UniProtKB" id="Q727N1"/>
    </source>
</evidence>
<evidence type="ECO:0000255" key="3">
    <source>
        <dbReference type="PROSITE-ProRule" id="PRU00493"/>
    </source>
</evidence>
<evidence type="ECO:0000255" key="4">
    <source>
        <dbReference type="PROSITE-ProRule" id="PRU00887"/>
    </source>
</evidence>
<evidence type="ECO:0000269" key="5">
    <source>
    </source>
</evidence>
<evidence type="ECO:0000303" key="6">
    <source>
    </source>
</evidence>
<evidence type="ECO:0000305" key="7"/>
<evidence type="ECO:0000305" key="8">
    <source>
    </source>
</evidence>
<evidence type="ECO:0000312" key="9">
    <source>
        <dbReference type="EMBL" id="ACL49338.1"/>
    </source>
</evidence>
<feature type="chain" id="PRO_0000450943" description="Isethionate sulfite-lyase">
    <location>
        <begin position="1"/>
        <end position="831"/>
    </location>
</feature>
<feature type="domain" description="PFL" evidence="4">
    <location>
        <begin position="32"/>
        <end position="701"/>
    </location>
</feature>
<feature type="domain" description="Glycine radical" evidence="3">
    <location>
        <begin position="708"/>
        <end position="831"/>
    </location>
</feature>
<feature type="active site" description="Cysteine radical intermediate" evidence="1">
    <location>
        <position position="468"/>
    </location>
</feature>
<feature type="active site" description="Proton acceptor" evidence="1">
    <location>
        <position position="470"/>
    </location>
</feature>
<feature type="binding site" evidence="2">
    <location>
        <position position="189"/>
    </location>
    <ligand>
        <name>2-hydroxyethane-1-sulfonate</name>
        <dbReference type="ChEBI" id="CHEBI:61904"/>
    </ligand>
</feature>
<feature type="binding site" evidence="2">
    <location>
        <position position="193"/>
    </location>
    <ligand>
        <name>2-hydroxyethane-1-sulfonate</name>
        <dbReference type="ChEBI" id="CHEBI:61904"/>
    </ligand>
</feature>
<feature type="binding site" evidence="2">
    <location>
        <begin position="468"/>
        <end position="470"/>
    </location>
    <ligand>
        <name>2-hydroxyethane-1-sulfonate</name>
        <dbReference type="ChEBI" id="CHEBI:61904"/>
    </ligand>
</feature>
<feature type="binding site" evidence="2">
    <location>
        <position position="679"/>
    </location>
    <ligand>
        <name>2-hydroxyethane-1-sulfonate</name>
        <dbReference type="ChEBI" id="CHEBI:61904"/>
    </ligand>
</feature>
<feature type="modified residue" description="Glycine radical" evidence="3">
    <location>
        <position position="806"/>
    </location>
</feature>
<protein>
    <recommendedName>
        <fullName evidence="6">Isethionate sulfite-lyase</fullName>
        <ecNumber evidence="5">4.4.1.38</ecNumber>
    </recommendedName>
    <alternativeName>
        <fullName evidence="6">Glycyl radical enzyme IslA</fullName>
        <shortName evidence="6">GRE IslA</shortName>
    </alternativeName>
</protein>
<gene>
    <name evidence="6" type="primary">islA</name>
    <name evidence="9" type="ordered locus">Ddes_1436</name>
</gene>
<comment type="function">
    <text evidence="5">Involved in an anaerobic respiration pathway that converts the sulfonate isethionate (2-hydroxyethanesulfonate) to ammonia, acetate and sulfide. Catalyzes the radical-mediated C-S bond cleavage of isethionate (2-hydroxyethanesulfonate) to form sulfite and acetaldehyde.</text>
</comment>
<comment type="catalytic activity">
    <reaction evidence="5">
        <text>2-hydroxyethane-1-sulfonate = acetaldehyde + sulfite + H(+)</text>
        <dbReference type="Rhea" id="RHEA:60452"/>
        <dbReference type="ChEBI" id="CHEBI:15343"/>
        <dbReference type="ChEBI" id="CHEBI:15378"/>
        <dbReference type="ChEBI" id="CHEBI:17359"/>
        <dbReference type="ChEBI" id="CHEBI:61904"/>
        <dbReference type="EC" id="4.4.1.38"/>
    </reaction>
    <physiologicalReaction direction="left-to-right" evidence="8">
        <dbReference type="Rhea" id="RHEA:60453"/>
    </physiologicalReaction>
</comment>
<comment type="biophysicochemical properties">
    <kinetics>
        <KM evidence="5">6.3 mM for 2-hydroxyethane-1-sulfonate</KM>
        <text evidence="5">kcat is 12 sec(-1).</text>
    </kinetics>
</comment>
<comment type="pathway">
    <text evidence="8">Organosulfur degradation; alkanesulfonate degradation.</text>
</comment>
<comment type="subunit">
    <text evidence="2">Homodimer.</text>
</comment>
<comment type="induction">
    <text evidence="5">Highly up-regulated in the presence of isethionate.</text>
</comment>
<comment type="PTM">
    <text evidence="5">Requires the activating protein IslB to generate the key active site glycyl radical on Gly-806 that is involved in catalysis.</text>
</comment>
<comment type="similarity">
    <text evidence="7">Belongs to the glycyl radical enzyme (GRE) family.</text>
</comment>
<dbReference type="EC" id="4.4.1.38" evidence="5"/>
<dbReference type="EMBL" id="CP001358">
    <property type="protein sequence ID" value="ACL49338.1"/>
    <property type="molecule type" value="Genomic_DNA"/>
</dbReference>
<dbReference type="SMR" id="B8J0R1"/>
<dbReference type="STRING" id="525146.Ddes_1436"/>
<dbReference type="KEGG" id="dds:Ddes_1436"/>
<dbReference type="eggNOG" id="COG1882">
    <property type="taxonomic scope" value="Bacteria"/>
</dbReference>
<dbReference type="HOGENOM" id="CLU_009096_0_1_7"/>
<dbReference type="BRENDA" id="4.4.1.38">
    <property type="organism ID" value="1905"/>
</dbReference>
<dbReference type="UniPathway" id="UPA00338"/>
<dbReference type="GO" id="GO:0005829">
    <property type="term" value="C:cytosol"/>
    <property type="evidence" value="ECO:0007669"/>
    <property type="project" value="TreeGrafter"/>
</dbReference>
<dbReference type="GO" id="GO:0016829">
    <property type="term" value="F:lyase activity"/>
    <property type="evidence" value="ECO:0007669"/>
    <property type="project" value="UniProtKB-KW"/>
</dbReference>
<dbReference type="GO" id="GO:0046306">
    <property type="term" value="P:alkanesulfonate catabolic process"/>
    <property type="evidence" value="ECO:0007669"/>
    <property type="project" value="UniProtKB-UniPathway"/>
</dbReference>
<dbReference type="CDD" id="cd01677">
    <property type="entry name" value="PFL2_DhaB_BssA"/>
    <property type="match status" value="1"/>
</dbReference>
<dbReference type="Gene3D" id="3.20.70.20">
    <property type="match status" value="1"/>
</dbReference>
<dbReference type="InterPro" id="IPR019777">
    <property type="entry name" value="Form_AcTrfase_GR_CS"/>
</dbReference>
<dbReference type="InterPro" id="IPR001150">
    <property type="entry name" value="Gly_radical"/>
</dbReference>
<dbReference type="InterPro" id="IPR051215">
    <property type="entry name" value="GRE"/>
</dbReference>
<dbReference type="InterPro" id="IPR004184">
    <property type="entry name" value="PFL_dom"/>
</dbReference>
<dbReference type="PANTHER" id="PTHR43641:SF2">
    <property type="entry name" value="DEHYDRATASE YBIW-RELATED"/>
    <property type="match status" value="1"/>
</dbReference>
<dbReference type="PANTHER" id="PTHR43641">
    <property type="entry name" value="FORMATE ACETYLTRANSFERASE 3-RELATED"/>
    <property type="match status" value="1"/>
</dbReference>
<dbReference type="Pfam" id="PF01228">
    <property type="entry name" value="Gly_radical"/>
    <property type="match status" value="1"/>
</dbReference>
<dbReference type="Pfam" id="PF02901">
    <property type="entry name" value="PFL-like"/>
    <property type="match status" value="1"/>
</dbReference>
<dbReference type="SUPFAM" id="SSF51998">
    <property type="entry name" value="PFL-like glycyl radical enzymes"/>
    <property type="match status" value="1"/>
</dbReference>
<dbReference type="PROSITE" id="PS00850">
    <property type="entry name" value="GLY_RADICAL_1"/>
    <property type="match status" value="1"/>
</dbReference>
<dbReference type="PROSITE" id="PS51149">
    <property type="entry name" value="GLY_RADICAL_2"/>
    <property type="match status" value="1"/>
</dbReference>
<dbReference type="PROSITE" id="PS51554">
    <property type="entry name" value="PFL"/>
    <property type="match status" value="1"/>
</dbReference>
<keyword id="KW-0456">Lyase</keyword>
<keyword id="KW-0556">Organic radical</keyword>
<keyword id="KW-0670">Pyruvate</keyword>
<reference key="1">
    <citation type="submission" date="2009-01" db="EMBL/GenBank/DDBJ databases">
        <title>Complete sequence of Desulfovibrio desulfuricans subsp. desulfuricans str. ATCC 27774.</title>
        <authorList>
            <consortium name="US DOE Joint Genome Institute"/>
            <person name="Lucas S."/>
            <person name="Copeland A."/>
            <person name="Lapidus A."/>
            <person name="Glavina del Rio T."/>
            <person name="Tice H."/>
            <person name="Bruce D."/>
            <person name="Goodwin L."/>
            <person name="Pitluck S."/>
            <person name="Sims D."/>
            <person name="Lu M."/>
            <person name="Kiss H."/>
            <person name="Meineke L."/>
            <person name="Brettin T."/>
            <person name="Detter J.C."/>
            <person name="Han C."/>
            <person name="Larimer F."/>
            <person name="Land M."/>
            <person name="Hauser L."/>
            <person name="Kyrpides N."/>
            <person name="Ovchinnikova G."/>
            <person name="Hazen T.C."/>
        </authorList>
    </citation>
    <scope>NUCLEOTIDE SEQUENCE [LARGE SCALE GENOMIC DNA]</scope>
    <source>
        <strain>ATCC 27774 / DSM 6949 / MB</strain>
    </source>
</reference>
<reference key="2">
    <citation type="journal article" date="2019" name="Proc. Natl. Acad. Sci. U.S.A.">
        <title>A glycyl radical enzyme enables hydrogen sulfide production by the human intestinal bacterium Bilophila wadsworthia.</title>
        <authorList>
            <person name="Peck S.C."/>
            <person name="Denger K."/>
            <person name="Burrichter A."/>
            <person name="Irwin S.M."/>
            <person name="Balskus E.P."/>
            <person name="Schleheck D."/>
        </authorList>
    </citation>
    <scope>FUNCTION</scope>
    <scope>CATALYTIC ACTIVITY</scope>
    <scope>BIOPHYSICOCHEMICAL PROPERTIES</scope>
    <scope>INDUCTION</scope>
    <scope>PATHWAY</scope>
    <source>
        <strain>DSM 642</strain>
    </source>
</reference>
<proteinExistence type="evidence at protein level"/>
<accession>B8J0R1</accession>